<gene>
    <name evidence="1" type="primary">coaA</name>
    <name type="ordered locus">SAK_1046</name>
</gene>
<dbReference type="EC" id="2.7.1.33" evidence="1"/>
<dbReference type="EMBL" id="CP000114">
    <property type="protein sequence ID" value="ABA45232.1"/>
    <property type="molecule type" value="Genomic_DNA"/>
</dbReference>
<dbReference type="RefSeq" id="WP_001058331.1">
    <property type="nucleotide sequence ID" value="NC_007432.1"/>
</dbReference>
<dbReference type="SMR" id="Q3K1D6"/>
<dbReference type="GeneID" id="66885873"/>
<dbReference type="KEGG" id="sak:SAK_1046"/>
<dbReference type="HOGENOM" id="CLU_053818_1_1_9"/>
<dbReference type="UniPathway" id="UPA00241">
    <property type="reaction ID" value="UER00352"/>
</dbReference>
<dbReference type="GO" id="GO:0005737">
    <property type="term" value="C:cytoplasm"/>
    <property type="evidence" value="ECO:0007669"/>
    <property type="project" value="UniProtKB-SubCell"/>
</dbReference>
<dbReference type="GO" id="GO:0005524">
    <property type="term" value="F:ATP binding"/>
    <property type="evidence" value="ECO:0007669"/>
    <property type="project" value="UniProtKB-UniRule"/>
</dbReference>
<dbReference type="GO" id="GO:0004594">
    <property type="term" value="F:pantothenate kinase activity"/>
    <property type="evidence" value="ECO:0007669"/>
    <property type="project" value="UniProtKB-UniRule"/>
</dbReference>
<dbReference type="GO" id="GO:0015937">
    <property type="term" value="P:coenzyme A biosynthetic process"/>
    <property type="evidence" value="ECO:0007669"/>
    <property type="project" value="UniProtKB-UniRule"/>
</dbReference>
<dbReference type="CDD" id="cd02025">
    <property type="entry name" value="PanK"/>
    <property type="match status" value="1"/>
</dbReference>
<dbReference type="Gene3D" id="3.40.50.300">
    <property type="entry name" value="P-loop containing nucleotide triphosphate hydrolases"/>
    <property type="match status" value="1"/>
</dbReference>
<dbReference type="HAMAP" id="MF_00215">
    <property type="entry name" value="Pantothen_kinase_1"/>
    <property type="match status" value="1"/>
</dbReference>
<dbReference type="InterPro" id="IPR027417">
    <property type="entry name" value="P-loop_NTPase"/>
</dbReference>
<dbReference type="InterPro" id="IPR004566">
    <property type="entry name" value="PanK"/>
</dbReference>
<dbReference type="InterPro" id="IPR006083">
    <property type="entry name" value="PRK/URK"/>
</dbReference>
<dbReference type="NCBIfam" id="TIGR00554">
    <property type="entry name" value="panK_bact"/>
    <property type="match status" value="1"/>
</dbReference>
<dbReference type="PANTHER" id="PTHR10285">
    <property type="entry name" value="URIDINE KINASE"/>
    <property type="match status" value="1"/>
</dbReference>
<dbReference type="Pfam" id="PF00485">
    <property type="entry name" value="PRK"/>
    <property type="match status" value="1"/>
</dbReference>
<dbReference type="PIRSF" id="PIRSF000545">
    <property type="entry name" value="Pantothenate_kin"/>
    <property type="match status" value="1"/>
</dbReference>
<dbReference type="SUPFAM" id="SSF52540">
    <property type="entry name" value="P-loop containing nucleoside triphosphate hydrolases"/>
    <property type="match status" value="1"/>
</dbReference>
<keyword id="KW-0067">ATP-binding</keyword>
<keyword id="KW-0173">Coenzyme A biosynthesis</keyword>
<keyword id="KW-0963">Cytoplasm</keyword>
<keyword id="KW-0418">Kinase</keyword>
<keyword id="KW-0547">Nucleotide-binding</keyword>
<keyword id="KW-0808">Transferase</keyword>
<feature type="chain" id="PRO_1000043262" description="Pantothenate kinase">
    <location>
        <begin position="1"/>
        <end position="306"/>
    </location>
</feature>
<feature type="binding site" evidence="1">
    <location>
        <begin position="91"/>
        <end position="98"/>
    </location>
    <ligand>
        <name>ATP</name>
        <dbReference type="ChEBI" id="CHEBI:30616"/>
    </ligand>
</feature>
<proteinExistence type="inferred from homology"/>
<comment type="catalytic activity">
    <reaction evidence="1">
        <text>(R)-pantothenate + ATP = (R)-4'-phosphopantothenate + ADP + H(+)</text>
        <dbReference type="Rhea" id="RHEA:16373"/>
        <dbReference type="ChEBI" id="CHEBI:10986"/>
        <dbReference type="ChEBI" id="CHEBI:15378"/>
        <dbReference type="ChEBI" id="CHEBI:29032"/>
        <dbReference type="ChEBI" id="CHEBI:30616"/>
        <dbReference type="ChEBI" id="CHEBI:456216"/>
        <dbReference type="EC" id="2.7.1.33"/>
    </reaction>
</comment>
<comment type="pathway">
    <text evidence="1">Cofactor biosynthesis; coenzyme A biosynthesis; CoA from (R)-pantothenate: step 1/5.</text>
</comment>
<comment type="subcellular location">
    <subcellularLocation>
        <location evidence="1">Cytoplasm</location>
    </subcellularLocation>
</comment>
<comment type="similarity">
    <text evidence="1">Belongs to the prokaryotic pantothenate kinase family.</text>
</comment>
<protein>
    <recommendedName>
        <fullName evidence="1">Pantothenate kinase</fullName>
        <ecNumber evidence="1">2.7.1.33</ecNumber>
    </recommendedName>
    <alternativeName>
        <fullName evidence="1">Pantothenic acid kinase</fullName>
    </alternativeName>
</protein>
<accession>Q3K1D6</accession>
<evidence type="ECO:0000255" key="1">
    <source>
        <dbReference type="HAMAP-Rule" id="MF_00215"/>
    </source>
</evidence>
<organism>
    <name type="scientific">Streptococcus agalactiae serotype Ia (strain ATCC 27591 / A909 / CDC SS700)</name>
    <dbReference type="NCBI Taxonomy" id="205921"/>
    <lineage>
        <taxon>Bacteria</taxon>
        <taxon>Bacillati</taxon>
        <taxon>Bacillota</taxon>
        <taxon>Bacilli</taxon>
        <taxon>Lactobacillales</taxon>
        <taxon>Streptococcaceae</taxon>
        <taxon>Streptococcus</taxon>
    </lineage>
</organism>
<reference key="1">
    <citation type="journal article" date="2005" name="Proc. Natl. Acad. Sci. U.S.A.">
        <title>Genome analysis of multiple pathogenic isolates of Streptococcus agalactiae: implications for the microbial 'pan-genome'.</title>
        <authorList>
            <person name="Tettelin H."/>
            <person name="Masignani V."/>
            <person name="Cieslewicz M.J."/>
            <person name="Donati C."/>
            <person name="Medini D."/>
            <person name="Ward N.L."/>
            <person name="Angiuoli S.V."/>
            <person name="Crabtree J."/>
            <person name="Jones A.L."/>
            <person name="Durkin A.S."/>
            <person name="DeBoy R.T."/>
            <person name="Davidsen T.M."/>
            <person name="Mora M."/>
            <person name="Scarselli M."/>
            <person name="Margarit y Ros I."/>
            <person name="Peterson J.D."/>
            <person name="Hauser C.R."/>
            <person name="Sundaram J.P."/>
            <person name="Nelson W.C."/>
            <person name="Madupu R."/>
            <person name="Brinkac L.M."/>
            <person name="Dodson R.J."/>
            <person name="Rosovitz M.J."/>
            <person name="Sullivan S.A."/>
            <person name="Daugherty S.C."/>
            <person name="Haft D.H."/>
            <person name="Selengut J."/>
            <person name="Gwinn M.L."/>
            <person name="Zhou L."/>
            <person name="Zafar N."/>
            <person name="Khouri H."/>
            <person name="Radune D."/>
            <person name="Dimitrov G."/>
            <person name="Watkins K."/>
            <person name="O'Connor K.J."/>
            <person name="Smith S."/>
            <person name="Utterback T.R."/>
            <person name="White O."/>
            <person name="Rubens C.E."/>
            <person name="Grandi G."/>
            <person name="Madoff L.C."/>
            <person name="Kasper D.L."/>
            <person name="Telford J.L."/>
            <person name="Wessels M.R."/>
            <person name="Rappuoli R."/>
            <person name="Fraser C.M."/>
        </authorList>
    </citation>
    <scope>NUCLEOTIDE SEQUENCE [LARGE SCALE GENOMIC DNA]</scope>
    <source>
        <strain>ATCC 27591 / A909 / CDC SS700</strain>
    </source>
</reference>
<name>COAA_STRA1</name>
<sequence>MNNEFINFDRISRENWKDLHQQSQALLTEKELESIKSLNDNINIQDVIDIYLPLINLIQIYKRSQENLSFSKAIFLKKENYQRPFIIGISGSVAVGKSTTSRLLQLLISRTFKDSHVELVTTDGFLYPNEKLIQNGILNRKGFPESYDMESLLNFLDTIKNGITAKIPIYSHEIYDIVPNQLQTIETPDFLILEGINVFQNQQNHRLYMNDYFDFSIYIDAENKQIEEWYLQRFNSLLQLAEADPSNYYHKFTQIPPHKAMELAKDIWKTINLVNLEKYIEPTRNRADFIIHKGKHHKIDEIYLKK</sequence>